<organism>
    <name type="scientific">Saccharolobus solfataricus (strain ATCC 35092 / DSM 1617 / JCM 11322 / P2)</name>
    <name type="common">Sulfolobus solfataricus</name>
    <dbReference type="NCBI Taxonomy" id="273057"/>
    <lineage>
        <taxon>Archaea</taxon>
        <taxon>Thermoproteota</taxon>
        <taxon>Thermoprotei</taxon>
        <taxon>Sulfolobales</taxon>
        <taxon>Sulfolobaceae</taxon>
        <taxon>Saccharolobus</taxon>
    </lineage>
</organism>
<name>SYK_SACS2</name>
<proteinExistence type="inferred from homology"/>
<gene>
    <name type="primary">lysS</name>
    <name type="ordered locus">SSO0090</name>
    <name type="ORF">C04_032</name>
</gene>
<accession>P95970</accession>
<sequence length="494" mass="57801">MLMNWDERRVKIVEELRKNGIEPYPHKYEVTHLIKDIKLIAKSQGNKSHEPFMFNISTAGRVANIRRHGKASFVDIFDEGEKLQLYMRVDELKEKYDKFFIYVGRGDIIGVKGDLFYTMKGELSLLVKDYQLLSKALIEPPDWSKLSPEFRYAHRYVDFLYNDNARKAMEIRYTIIREIREFLYSKGFIEVETPIVQPVYGGALAKPFKTHVNYLNEDWYLRIALELYLKRYIIGGFNKVFEIGKVFRNEDIDVTHNPEFTLLELYWAYADYNDIMNLTEDLLKSVVKKVTNSTKIVYGKYEIDFEGPFKRISMYDSLSEILGKDVESMSDNELKELMKKYNLTPRGNQYVRGLMIEKLFDKLVTPTLTNPTFITDYPIETTPLCKPHRNKPGLVERFEMFIAGMEVANAYTELNDPILQDKLFREEQEMFRRGDEEAHPYDKDFVRALSYGMPPTGGLGIGIDRIVMLVTNNYSIKEVIPFPMISSKVILEDD</sequence>
<evidence type="ECO:0000250" key="1"/>
<evidence type="ECO:0000305" key="2"/>
<feature type="chain" id="PRO_0000152714" description="Lysine--tRNA ligase">
    <location>
        <begin position="1"/>
        <end position="494"/>
    </location>
</feature>
<feature type="binding site" evidence="1">
    <location>
        <position position="399"/>
    </location>
    <ligand>
        <name>Mg(2+)</name>
        <dbReference type="ChEBI" id="CHEBI:18420"/>
        <label>1</label>
    </ligand>
</feature>
<feature type="binding site" evidence="1">
    <location>
        <position position="406"/>
    </location>
    <ligand>
        <name>Mg(2+)</name>
        <dbReference type="ChEBI" id="CHEBI:18420"/>
        <label>1</label>
    </ligand>
</feature>
<feature type="binding site" evidence="1">
    <location>
        <position position="406"/>
    </location>
    <ligand>
        <name>Mg(2+)</name>
        <dbReference type="ChEBI" id="CHEBI:18420"/>
        <label>2</label>
    </ligand>
</feature>
<reference key="1">
    <citation type="journal article" date="1996" name="Mol. Microbiol.">
        <title>Organizational characteristics and information content of an archaeal genome: 156 kb of sequence from Sulfolobus solfataricus P2.</title>
        <authorList>
            <person name="Sensen C.W."/>
            <person name="Klenk H.-P."/>
            <person name="Singh R.K."/>
            <person name="Allard G."/>
            <person name="Chan C.C.-Y."/>
            <person name="Liu Q.Y."/>
            <person name="Penny S.L."/>
            <person name="Young F."/>
            <person name="Schenk M.E."/>
            <person name="Gaasterland T."/>
            <person name="Doolittle W.F."/>
            <person name="Ragan M.A."/>
            <person name="Charlebois R.L."/>
        </authorList>
    </citation>
    <scope>NUCLEOTIDE SEQUENCE [GENOMIC DNA]</scope>
    <source>
        <strain>ATCC 35092 / DSM 1617 / JCM 11322 / P2</strain>
    </source>
</reference>
<reference key="2">
    <citation type="journal article" date="2001" name="Proc. Natl. Acad. Sci. U.S.A.">
        <title>The complete genome of the crenarchaeon Sulfolobus solfataricus P2.</title>
        <authorList>
            <person name="She Q."/>
            <person name="Singh R.K."/>
            <person name="Confalonieri F."/>
            <person name="Zivanovic Y."/>
            <person name="Allard G."/>
            <person name="Awayez M.J."/>
            <person name="Chan-Weiher C.C.-Y."/>
            <person name="Clausen I.G."/>
            <person name="Curtis B.A."/>
            <person name="De Moors A."/>
            <person name="Erauso G."/>
            <person name="Fletcher C."/>
            <person name="Gordon P.M.K."/>
            <person name="Heikamp-de Jong I."/>
            <person name="Jeffries A.C."/>
            <person name="Kozera C.J."/>
            <person name="Medina N."/>
            <person name="Peng X."/>
            <person name="Thi-Ngoc H.P."/>
            <person name="Redder P."/>
            <person name="Schenk M.E."/>
            <person name="Theriault C."/>
            <person name="Tolstrup N."/>
            <person name="Charlebois R.L."/>
            <person name="Doolittle W.F."/>
            <person name="Duguet M."/>
            <person name="Gaasterland T."/>
            <person name="Garrett R.A."/>
            <person name="Ragan M.A."/>
            <person name="Sensen C.W."/>
            <person name="Van der Oost J."/>
        </authorList>
    </citation>
    <scope>NUCLEOTIDE SEQUENCE [LARGE SCALE GENOMIC DNA]</scope>
    <source>
        <strain>ATCC 35092 / DSM 1617 / JCM 11322 / P2</strain>
    </source>
</reference>
<dbReference type="EC" id="6.1.1.6"/>
<dbReference type="EMBL" id="Y08257">
    <property type="protein sequence ID" value="CAA69561.1"/>
    <property type="molecule type" value="Genomic_DNA"/>
</dbReference>
<dbReference type="EMBL" id="AE006641">
    <property type="protein sequence ID" value="AAK40448.1"/>
    <property type="molecule type" value="Genomic_DNA"/>
</dbReference>
<dbReference type="PIR" id="S75398">
    <property type="entry name" value="S75398"/>
</dbReference>
<dbReference type="SMR" id="P95970"/>
<dbReference type="FunCoup" id="P95970">
    <property type="interactions" value="349"/>
</dbReference>
<dbReference type="STRING" id="273057.SSO0090"/>
<dbReference type="PaxDb" id="273057-SSO0090"/>
<dbReference type="EnsemblBacteria" id="AAK40448">
    <property type="protein sequence ID" value="AAK40448"/>
    <property type="gene ID" value="SSO0090"/>
</dbReference>
<dbReference type="KEGG" id="sso:SSO0090"/>
<dbReference type="PATRIC" id="fig|273057.12.peg.87"/>
<dbReference type="eggNOG" id="arCOG00408">
    <property type="taxonomic scope" value="Archaea"/>
</dbReference>
<dbReference type="HOGENOM" id="CLU_008255_6_0_2"/>
<dbReference type="InParanoid" id="P95970"/>
<dbReference type="PhylomeDB" id="P95970"/>
<dbReference type="Proteomes" id="UP000001974">
    <property type="component" value="Chromosome"/>
</dbReference>
<dbReference type="GO" id="GO:0005737">
    <property type="term" value="C:cytoplasm"/>
    <property type="evidence" value="ECO:0000318"/>
    <property type="project" value="GO_Central"/>
</dbReference>
<dbReference type="GO" id="GO:0005524">
    <property type="term" value="F:ATP binding"/>
    <property type="evidence" value="ECO:0007669"/>
    <property type="project" value="UniProtKB-UniRule"/>
</dbReference>
<dbReference type="GO" id="GO:0004824">
    <property type="term" value="F:lysine-tRNA ligase activity"/>
    <property type="evidence" value="ECO:0000318"/>
    <property type="project" value="GO_Central"/>
</dbReference>
<dbReference type="GO" id="GO:0000287">
    <property type="term" value="F:magnesium ion binding"/>
    <property type="evidence" value="ECO:0007669"/>
    <property type="project" value="UniProtKB-UniRule"/>
</dbReference>
<dbReference type="GO" id="GO:0000049">
    <property type="term" value="F:tRNA binding"/>
    <property type="evidence" value="ECO:0000318"/>
    <property type="project" value="GO_Central"/>
</dbReference>
<dbReference type="GO" id="GO:0006430">
    <property type="term" value="P:lysyl-tRNA aminoacylation"/>
    <property type="evidence" value="ECO:0000318"/>
    <property type="project" value="GO_Central"/>
</dbReference>
<dbReference type="CDD" id="cd00775">
    <property type="entry name" value="LysRS_core"/>
    <property type="match status" value="1"/>
</dbReference>
<dbReference type="CDD" id="cd04322">
    <property type="entry name" value="LysRS_N"/>
    <property type="match status" value="1"/>
</dbReference>
<dbReference type="FunFam" id="3.30.930.10:FF:000151">
    <property type="entry name" value="Lysine--tRNA ligase"/>
    <property type="match status" value="1"/>
</dbReference>
<dbReference type="Gene3D" id="3.30.930.10">
    <property type="entry name" value="Bira Bifunctional Protein, Domain 2"/>
    <property type="match status" value="1"/>
</dbReference>
<dbReference type="Gene3D" id="2.40.50.140">
    <property type="entry name" value="Nucleic acid-binding proteins"/>
    <property type="match status" value="1"/>
</dbReference>
<dbReference type="HAMAP" id="MF_00252">
    <property type="entry name" value="Lys_tRNA_synth_class2"/>
    <property type="match status" value="1"/>
</dbReference>
<dbReference type="InterPro" id="IPR004364">
    <property type="entry name" value="Aa-tRNA-synt_II"/>
</dbReference>
<dbReference type="InterPro" id="IPR006195">
    <property type="entry name" value="aa-tRNA-synth_II"/>
</dbReference>
<dbReference type="InterPro" id="IPR045864">
    <property type="entry name" value="aa-tRNA-synth_II/BPL/LPL"/>
</dbReference>
<dbReference type="InterPro" id="IPR002313">
    <property type="entry name" value="Lys-tRNA-ligase_II"/>
</dbReference>
<dbReference type="InterPro" id="IPR044136">
    <property type="entry name" value="Lys-tRNA-ligase_II_N"/>
</dbReference>
<dbReference type="InterPro" id="IPR018149">
    <property type="entry name" value="Lys-tRNA-synth_II_C"/>
</dbReference>
<dbReference type="InterPro" id="IPR012340">
    <property type="entry name" value="NA-bd_OB-fold"/>
</dbReference>
<dbReference type="InterPro" id="IPR004365">
    <property type="entry name" value="NA-bd_OB_tRNA"/>
</dbReference>
<dbReference type="NCBIfam" id="TIGR00499">
    <property type="entry name" value="lysS_bact"/>
    <property type="match status" value="1"/>
</dbReference>
<dbReference type="NCBIfam" id="NF001756">
    <property type="entry name" value="PRK00484.1"/>
    <property type="match status" value="1"/>
</dbReference>
<dbReference type="PANTHER" id="PTHR42918:SF15">
    <property type="entry name" value="LYSINE--TRNA LIGASE, CHLOROPLASTIC_MITOCHONDRIAL"/>
    <property type="match status" value="1"/>
</dbReference>
<dbReference type="PANTHER" id="PTHR42918">
    <property type="entry name" value="LYSYL-TRNA SYNTHETASE"/>
    <property type="match status" value="1"/>
</dbReference>
<dbReference type="Pfam" id="PF00152">
    <property type="entry name" value="tRNA-synt_2"/>
    <property type="match status" value="1"/>
</dbReference>
<dbReference type="Pfam" id="PF01336">
    <property type="entry name" value="tRNA_anti-codon"/>
    <property type="match status" value="1"/>
</dbReference>
<dbReference type="PRINTS" id="PR00982">
    <property type="entry name" value="TRNASYNTHLYS"/>
</dbReference>
<dbReference type="SUPFAM" id="SSF55681">
    <property type="entry name" value="Class II aaRS and biotin synthetases"/>
    <property type="match status" value="1"/>
</dbReference>
<dbReference type="SUPFAM" id="SSF50249">
    <property type="entry name" value="Nucleic acid-binding proteins"/>
    <property type="match status" value="1"/>
</dbReference>
<dbReference type="PROSITE" id="PS50862">
    <property type="entry name" value="AA_TRNA_LIGASE_II"/>
    <property type="match status" value="1"/>
</dbReference>
<keyword id="KW-0030">Aminoacyl-tRNA synthetase</keyword>
<keyword id="KW-0067">ATP-binding</keyword>
<keyword id="KW-0963">Cytoplasm</keyword>
<keyword id="KW-0436">Ligase</keyword>
<keyword id="KW-0460">Magnesium</keyword>
<keyword id="KW-0479">Metal-binding</keyword>
<keyword id="KW-0547">Nucleotide-binding</keyword>
<keyword id="KW-0648">Protein biosynthesis</keyword>
<keyword id="KW-1185">Reference proteome</keyword>
<comment type="catalytic activity">
    <reaction>
        <text>tRNA(Lys) + L-lysine + ATP = L-lysyl-tRNA(Lys) + AMP + diphosphate</text>
        <dbReference type="Rhea" id="RHEA:20792"/>
        <dbReference type="Rhea" id="RHEA-COMP:9696"/>
        <dbReference type="Rhea" id="RHEA-COMP:9697"/>
        <dbReference type="ChEBI" id="CHEBI:30616"/>
        <dbReference type="ChEBI" id="CHEBI:32551"/>
        <dbReference type="ChEBI" id="CHEBI:33019"/>
        <dbReference type="ChEBI" id="CHEBI:78442"/>
        <dbReference type="ChEBI" id="CHEBI:78529"/>
        <dbReference type="ChEBI" id="CHEBI:456215"/>
        <dbReference type="EC" id="6.1.1.6"/>
    </reaction>
</comment>
<comment type="cofactor">
    <cofactor evidence="1">
        <name>Mg(2+)</name>
        <dbReference type="ChEBI" id="CHEBI:18420"/>
    </cofactor>
    <text evidence="1">Binds 3 Mg(2+) ions per subunit.</text>
</comment>
<comment type="subcellular location">
    <subcellularLocation>
        <location>Cytoplasm</location>
    </subcellularLocation>
</comment>
<comment type="similarity">
    <text evidence="2">Belongs to the class-II aminoacyl-tRNA synthetase family.</text>
</comment>
<protein>
    <recommendedName>
        <fullName>Lysine--tRNA ligase</fullName>
        <ecNumber>6.1.1.6</ecNumber>
    </recommendedName>
    <alternativeName>
        <fullName>Lysyl-tRNA synthetase</fullName>
        <shortName>LysRS</shortName>
    </alternativeName>
</protein>